<reference key="1">
    <citation type="journal article" date="2002" name="Nature">
        <title>The genome sequence and structure of rice chromosome 1.</title>
        <authorList>
            <person name="Sasaki T."/>
            <person name="Matsumoto T."/>
            <person name="Yamamoto K."/>
            <person name="Sakata K."/>
            <person name="Baba T."/>
            <person name="Katayose Y."/>
            <person name="Wu J."/>
            <person name="Niimura Y."/>
            <person name="Cheng Z."/>
            <person name="Nagamura Y."/>
            <person name="Antonio B.A."/>
            <person name="Kanamori H."/>
            <person name="Hosokawa S."/>
            <person name="Masukawa M."/>
            <person name="Arikawa K."/>
            <person name="Chiden Y."/>
            <person name="Hayashi M."/>
            <person name="Okamoto M."/>
            <person name="Ando T."/>
            <person name="Aoki H."/>
            <person name="Arita K."/>
            <person name="Hamada M."/>
            <person name="Harada C."/>
            <person name="Hijishita S."/>
            <person name="Honda M."/>
            <person name="Ichikawa Y."/>
            <person name="Idonuma A."/>
            <person name="Iijima M."/>
            <person name="Ikeda M."/>
            <person name="Ikeno M."/>
            <person name="Ito S."/>
            <person name="Ito T."/>
            <person name="Ito Y."/>
            <person name="Ito Y."/>
            <person name="Iwabuchi A."/>
            <person name="Kamiya K."/>
            <person name="Karasawa W."/>
            <person name="Katagiri S."/>
            <person name="Kikuta A."/>
            <person name="Kobayashi N."/>
            <person name="Kono I."/>
            <person name="Machita K."/>
            <person name="Maehara T."/>
            <person name="Mizuno H."/>
            <person name="Mizubayashi T."/>
            <person name="Mukai Y."/>
            <person name="Nagasaki H."/>
            <person name="Nakashima M."/>
            <person name="Nakama Y."/>
            <person name="Nakamichi Y."/>
            <person name="Nakamura M."/>
            <person name="Namiki N."/>
            <person name="Negishi M."/>
            <person name="Ohta I."/>
            <person name="Ono N."/>
            <person name="Saji S."/>
            <person name="Sakai K."/>
            <person name="Shibata M."/>
            <person name="Shimokawa T."/>
            <person name="Shomura A."/>
            <person name="Song J."/>
            <person name="Takazaki Y."/>
            <person name="Terasawa K."/>
            <person name="Tsuji K."/>
            <person name="Waki K."/>
            <person name="Yamagata H."/>
            <person name="Yamane H."/>
            <person name="Yoshiki S."/>
            <person name="Yoshihara R."/>
            <person name="Yukawa K."/>
            <person name="Zhong H."/>
            <person name="Iwama H."/>
            <person name="Endo T."/>
            <person name="Ito H."/>
            <person name="Hahn J.H."/>
            <person name="Kim H.-I."/>
            <person name="Eun M.-Y."/>
            <person name="Yano M."/>
            <person name="Jiang J."/>
            <person name="Gojobori T."/>
        </authorList>
    </citation>
    <scope>NUCLEOTIDE SEQUENCE [LARGE SCALE GENOMIC DNA]</scope>
    <source>
        <strain>cv. Nipponbare</strain>
    </source>
</reference>
<reference key="2">
    <citation type="journal article" date="2005" name="Nature">
        <title>The map-based sequence of the rice genome.</title>
        <authorList>
            <consortium name="International rice genome sequencing project (IRGSP)"/>
        </authorList>
    </citation>
    <scope>NUCLEOTIDE SEQUENCE [LARGE SCALE GENOMIC DNA]</scope>
    <source>
        <strain>cv. Nipponbare</strain>
    </source>
</reference>
<reference key="3">
    <citation type="journal article" date="2013" name="Rice">
        <title>Improvement of the Oryza sativa Nipponbare reference genome using next generation sequence and optical map data.</title>
        <authorList>
            <person name="Kawahara Y."/>
            <person name="de la Bastide M."/>
            <person name="Hamilton J.P."/>
            <person name="Kanamori H."/>
            <person name="McCombie W.R."/>
            <person name="Ouyang S."/>
            <person name="Schwartz D.C."/>
            <person name="Tanaka T."/>
            <person name="Wu J."/>
            <person name="Zhou S."/>
            <person name="Childs K.L."/>
            <person name="Davidson R.M."/>
            <person name="Lin H."/>
            <person name="Quesada-Ocampo L."/>
            <person name="Vaillancourt B."/>
            <person name="Sakai H."/>
            <person name="Lee S.S."/>
            <person name="Kim J."/>
            <person name="Numa H."/>
            <person name="Itoh T."/>
            <person name="Buell C.R."/>
            <person name="Matsumoto T."/>
        </authorList>
    </citation>
    <scope>GENOME REANNOTATION</scope>
    <source>
        <strain>cv. Nipponbare</strain>
    </source>
</reference>
<reference key="4">
    <citation type="journal article" date="2005" name="PLoS Biol.">
        <title>The genomes of Oryza sativa: a history of duplications.</title>
        <authorList>
            <person name="Yu J."/>
            <person name="Wang J."/>
            <person name="Lin W."/>
            <person name="Li S."/>
            <person name="Li H."/>
            <person name="Zhou J."/>
            <person name="Ni P."/>
            <person name="Dong W."/>
            <person name="Hu S."/>
            <person name="Zeng C."/>
            <person name="Zhang J."/>
            <person name="Zhang Y."/>
            <person name="Li R."/>
            <person name="Xu Z."/>
            <person name="Li S."/>
            <person name="Li X."/>
            <person name="Zheng H."/>
            <person name="Cong L."/>
            <person name="Lin L."/>
            <person name="Yin J."/>
            <person name="Geng J."/>
            <person name="Li G."/>
            <person name="Shi J."/>
            <person name="Liu J."/>
            <person name="Lv H."/>
            <person name="Li J."/>
            <person name="Wang J."/>
            <person name="Deng Y."/>
            <person name="Ran L."/>
            <person name="Shi X."/>
            <person name="Wang X."/>
            <person name="Wu Q."/>
            <person name="Li C."/>
            <person name="Ren X."/>
            <person name="Wang J."/>
            <person name="Wang X."/>
            <person name="Li D."/>
            <person name="Liu D."/>
            <person name="Zhang X."/>
            <person name="Ji Z."/>
            <person name="Zhao W."/>
            <person name="Sun Y."/>
            <person name="Zhang Z."/>
            <person name="Bao J."/>
            <person name="Han Y."/>
            <person name="Dong L."/>
            <person name="Ji J."/>
            <person name="Chen P."/>
            <person name="Wu S."/>
            <person name="Liu J."/>
            <person name="Xiao Y."/>
            <person name="Bu D."/>
            <person name="Tan J."/>
            <person name="Yang L."/>
            <person name="Ye C."/>
            <person name="Zhang J."/>
            <person name="Xu J."/>
            <person name="Zhou Y."/>
            <person name="Yu Y."/>
            <person name="Zhang B."/>
            <person name="Zhuang S."/>
            <person name="Wei H."/>
            <person name="Liu B."/>
            <person name="Lei M."/>
            <person name="Yu H."/>
            <person name="Li Y."/>
            <person name="Xu H."/>
            <person name="Wei S."/>
            <person name="He X."/>
            <person name="Fang L."/>
            <person name="Zhang Z."/>
            <person name="Zhang Y."/>
            <person name="Huang X."/>
            <person name="Su Z."/>
            <person name="Tong W."/>
            <person name="Li J."/>
            <person name="Tong Z."/>
            <person name="Li S."/>
            <person name="Ye J."/>
            <person name="Wang L."/>
            <person name="Fang L."/>
            <person name="Lei T."/>
            <person name="Chen C.-S."/>
            <person name="Chen H.-C."/>
            <person name="Xu Z."/>
            <person name="Li H."/>
            <person name="Huang H."/>
            <person name="Zhang F."/>
            <person name="Xu H."/>
            <person name="Li N."/>
            <person name="Zhao C."/>
            <person name="Li S."/>
            <person name="Dong L."/>
            <person name="Huang Y."/>
            <person name="Li L."/>
            <person name="Xi Y."/>
            <person name="Qi Q."/>
            <person name="Li W."/>
            <person name="Zhang B."/>
            <person name="Hu W."/>
            <person name="Zhang Y."/>
            <person name="Tian X."/>
            <person name="Jiao Y."/>
            <person name="Liang X."/>
            <person name="Jin J."/>
            <person name="Gao L."/>
            <person name="Zheng W."/>
            <person name="Hao B."/>
            <person name="Liu S.-M."/>
            <person name="Wang W."/>
            <person name="Yuan L."/>
            <person name="Cao M."/>
            <person name="McDermott J."/>
            <person name="Samudrala R."/>
            <person name="Wang J."/>
            <person name="Wong G.K.-S."/>
            <person name="Yang H."/>
        </authorList>
    </citation>
    <scope>NUCLEOTIDE SEQUENCE [LARGE SCALE GENOMIC DNA]</scope>
    <source>
        <strain>cv. Nipponbare</strain>
    </source>
</reference>
<reference key="5">
    <citation type="submission" date="2006-10" db="EMBL/GenBank/DDBJ databases">
        <title>Oryza sativa full length cDNA.</title>
        <authorList>
            <consortium name="The rice full-length cDNA consortium"/>
        </authorList>
    </citation>
    <scope>NUCLEOTIDE SEQUENCE [LARGE SCALE MRNA]</scope>
    <source>
        <strain>cv. Nipponbare</strain>
    </source>
</reference>
<reference key="6">
    <citation type="journal article" date="2006" name="BMC Plant Biol.">
        <title>Analysis of rice glycosyl hydrolase family 1 and expression of Os4bglu12 beta-glucosidase.</title>
        <authorList>
            <person name="Opassiri R."/>
            <person name="Pomthong B."/>
            <person name="Onkoksoong T."/>
            <person name="Akiyama T."/>
            <person name="Esen A."/>
            <person name="Ketudat Cairns J.R."/>
        </authorList>
    </citation>
    <scope>GENE FAMILY</scope>
    <scope>NOMENCLATURE</scope>
</reference>
<keyword id="KW-0325">Glycoprotein</keyword>
<keyword id="KW-0326">Glycosidase</keyword>
<keyword id="KW-0378">Hydrolase</keyword>
<keyword id="KW-1185">Reference proteome</keyword>
<name>BGL04_ORYSJ</name>
<proteinExistence type="evidence at transcript level"/>
<organism>
    <name type="scientific">Oryza sativa subsp. japonica</name>
    <name type="common">Rice</name>
    <dbReference type="NCBI Taxonomy" id="39947"/>
    <lineage>
        <taxon>Eukaryota</taxon>
        <taxon>Viridiplantae</taxon>
        <taxon>Streptophyta</taxon>
        <taxon>Embryophyta</taxon>
        <taxon>Tracheophyta</taxon>
        <taxon>Spermatophyta</taxon>
        <taxon>Magnoliopsida</taxon>
        <taxon>Liliopsida</taxon>
        <taxon>Poales</taxon>
        <taxon>Poaceae</taxon>
        <taxon>BOP clade</taxon>
        <taxon>Oryzoideae</taxon>
        <taxon>Oryzeae</taxon>
        <taxon>Oryzinae</taxon>
        <taxon>Oryza</taxon>
        <taxon>Oryza sativa</taxon>
    </lineage>
</organism>
<accession>Q5N863</accession>
<accession>A0A0P0VBL2</accession>
<sequence length="483" mass="55295">MGSTGRDAEVTRGDFPDGFVFGVATSAYQIEGARREGGKGDNIWDVFTENKERILDGSSGEVAVDHYHRYKEDIELMASLGFRAYRFSISWPRIFPDGLGKNVNEQGVAFYNDLINFMIEKGIEPYATLYHWDLPHNLQQTVGGWLSDKIVEYFALYAEACFANFGDRVKHWITINEPLQTAVNGYGIGHFAPGGCEGETARCYLAAHYQILAHAAAVDVYRRKFKAVQGGEVGLVVDCEWAEPFSEKTEDQVAAERRLDFQLGWYLDPIYFGDYPESMRQRLGDDLPTFSEKDKEFIRNKIDFVGINHYTSRFIAHHQDPEDIYFYRVQQVERIEKWNTGEKIGERAASEWLFIVPWGLRKLLNYAAKRYGNPVIYVTENGMDEEDDQSATLDQVLNDTTRVGYFKGYLASVAQAIKDGADVRGYFAWSFLDNFEWAMGYTKRFGIVYVDYKNGLSRHPKASARWFSRFLKGDDAENKADMN</sequence>
<gene>
    <name type="primary">BGLU4</name>
    <name type="ordered locus">Os01g0897600</name>
    <name type="ordered locus">LOC_Os01g67220</name>
    <name type="ORF">OsJ_04409</name>
    <name type="ORF">P0506A10.5</name>
    <name type="ORF">P0674H09.22</name>
</gene>
<protein>
    <recommendedName>
        <fullName>Beta-glucosidase 4</fullName>
        <shortName>Os1bglu4</shortName>
        <ecNumber evidence="2">3.2.1.21</ecNumber>
    </recommendedName>
</protein>
<dbReference type="EC" id="3.2.1.21" evidence="2"/>
<dbReference type="EMBL" id="AP003349">
    <property type="protein sequence ID" value="BAD82183.1"/>
    <property type="molecule type" value="Genomic_DNA"/>
</dbReference>
<dbReference type="EMBL" id="AP003418">
    <property type="protein sequence ID" value="BAD82346.1"/>
    <property type="molecule type" value="Genomic_DNA"/>
</dbReference>
<dbReference type="EMBL" id="AP014957">
    <property type="protein sequence ID" value="BAS75715.1"/>
    <property type="molecule type" value="Genomic_DNA"/>
</dbReference>
<dbReference type="EMBL" id="CM000138">
    <property type="protein sequence ID" value="EAZ14486.1"/>
    <property type="molecule type" value="Genomic_DNA"/>
</dbReference>
<dbReference type="EMBL" id="AK243365">
    <property type="status" value="NOT_ANNOTATED_CDS"/>
    <property type="molecule type" value="mRNA"/>
</dbReference>
<dbReference type="RefSeq" id="XP_015650173.1">
    <property type="nucleotide sequence ID" value="XM_015794687.1"/>
</dbReference>
<dbReference type="SMR" id="Q5N863"/>
<dbReference type="FunCoup" id="Q5N863">
    <property type="interactions" value="1109"/>
</dbReference>
<dbReference type="STRING" id="39947.Q5N863"/>
<dbReference type="GlyCosmos" id="Q5N863">
    <property type="glycosylation" value="1 site, No reported glycans"/>
</dbReference>
<dbReference type="PaxDb" id="39947-Q5N863"/>
<dbReference type="EnsemblPlants" id="Os01t0897600-01">
    <property type="protein sequence ID" value="Os01t0897600-01"/>
    <property type="gene ID" value="Os01g0897600"/>
</dbReference>
<dbReference type="Gramene" id="Os01t0897600-01">
    <property type="protein sequence ID" value="Os01t0897600-01"/>
    <property type="gene ID" value="Os01g0897600"/>
</dbReference>
<dbReference type="eggNOG" id="KOG0626">
    <property type="taxonomic scope" value="Eukaryota"/>
</dbReference>
<dbReference type="HOGENOM" id="CLU_001859_1_3_1"/>
<dbReference type="InParanoid" id="Q5N863"/>
<dbReference type="OMA" id="HGSNDFY"/>
<dbReference type="OrthoDB" id="65569at2759"/>
<dbReference type="Proteomes" id="UP000000763">
    <property type="component" value="Chromosome 1"/>
</dbReference>
<dbReference type="Proteomes" id="UP000007752">
    <property type="component" value="Chromosome 1"/>
</dbReference>
<dbReference type="Proteomes" id="UP000059680">
    <property type="component" value="Chromosome 1"/>
</dbReference>
<dbReference type="GO" id="GO:0033907">
    <property type="term" value="F:beta-D-fucosidase activity"/>
    <property type="evidence" value="ECO:0007669"/>
    <property type="project" value="UniProtKB-ARBA"/>
</dbReference>
<dbReference type="GO" id="GO:0004565">
    <property type="term" value="F:beta-galactosidase activity"/>
    <property type="evidence" value="ECO:0007669"/>
    <property type="project" value="UniProtKB-ARBA"/>
</dbReference>
<dbReference type="GO" id="GO:0008422">
    <property type="term" value="F:beta-glucosidase activity"/>
    <property type="evidence" value="ECO:0000318"/>
    <property type="project" value="GO_Central"/>
</dbReference>
<dbReference type="GO" id="GO:0030245">
    <property type="term" value="P:cellulose catabolic process"/>
    <property type="evidence" value="ECO:0007669"/>
    <property type="project" value="InterPro"/>
</dbReference>
<dbReference type="GO" id="GO:0009866">
    <property type="term" value="P:induced systemic resistance, ethylene mediated signaling pathway"/>
    <property type="evidence" value="ECO:0007669"/>
    <property type="project" value="EnsemblPlants"/>
</dbReference>
<dbReference type="GO" id="GO:1990641">
    <property type="term" value="P:response to iron ion starvation"/>
    <property type="evidence" value="ECO:0007669"/>
    <property type="project" value="EnsemblPlants"/>
</dbReference>
<dbReference type="GO" id="GO:0019748">
    <property type="term" value="P:secondary metabolic process"/>
    <property type="evidence" value="ECO:0007669"/>
    <property type="project" value="EnsemblPlants"/>
</dbReference>
<dbReference type="FunFam" id="3.20.20.80:FF:000022">
    <property type="entry name" value="Beta-glucosidase 11"/>
    <property type="match status" value="1"/>
</dbReference>
<dbReference type="Gene3D" id="3.20.20.80">
    <property type="entry name" value="Glycosidases"/>
    <property type="match status" value="1"/>
</dbReference>
<dbReference type="InterPro" id="IPR001360">
    <property type="entry name" value="Glyco_hydro_1"/>
</dbReference>
<dbReference type="InterPro" id="IPR017736">
    <property type="entry name" value="Glyco_hydro_1_beta-glucosidase"/>
</dbReference>
<dbReference type="InterPro" id="IPR033132">
    <property type="entry name" value="Glyco_hydro_1_N_CS"/>
</dbReference>
<dbReference type="InterPro" id="IPR017853">
    <property type="entry name" value="Glycoside_hydrolase_SF"/>
</dbReference>
<dbReference type="NCBIfam" id="TIGR03356">
    <property type="entry name" value="BGL"/>
    <property type="match status" value="1"/>
</dbReference>
<dbReference type="PANTHER" id="PTHR10353:SF310">
    <property type="entry name" value="BETA-GLUCOSIDASE 42"/>
    <property type="match status" value="1"/>
</dbReference>
<dbReference type="PANTHER" id="PTHR10353">
    <property type="entry name" value="GLYCOSYL HYDROLASE"/>
    <property type="match status" value="1"/>
</dbReference>
<dbReference type="Pfam" id="PF00232">
    <property type="entry name" value="Glyco_hydro_1"/>
    <property type="match status" value="1"/>
</dbReference>
<dbReference type="PRINTS" id="PR00131">
    <property type="entry name" value="GLHYDRLASE1"/>
</dbReference>
<dbReference type="SUPFAM" id="SSF51445">
    <property type="entry name" value="(Trans)glycosidases"/>
    <property type="match status" value="1"/>
</dbReference>
<dbReference type="PROSITE" id="PS00653">
    <property type="entry name" value="GLYCOSYL_HYDROL_F1_2"/>
    <property type="match status" value="1"/>
</dbReference>
<evidence type="ECO:0000250" key="1">
    <source>
        <dbReference type="UniProtKB" id="Q1XH05"/>
    </source>
</evidence>
<evidence type="ECO:0000250" key="2">
    <source>
        <dbReference type="UniProtKB" id="Q75I94"/>
    </source>
</evidence>
<evidence type="ECO:0000250" key="3">
    <source>
        <dbReference type="UniProtKB" id="Q7XSK0"/>
    </source>
</evidence>
<evidence type="ECO:0000250" key="4">
    <source>
        <dbReference type="UniProtKB" id="Q9SPP9"/>
    </source>
</evidence>
<evidence type="ECO:0000255" key="5">
    <source>
        <dbReference type="PROSITE-ProRule" id="PRU00498"/>
    </source>
</evidence>
<evidence type="ECO:0000305" key="6"/>
<comment type="catalytic activity">
    <reaction evidence="2">
        <text>Hydrolysis of terminal, non-reducing beta-D-glucosyl residues with release of beta-D-glucose.</text>
        <dbReference type="EC" id="3.2.1.21"/>
    </reaction>
</comment>
<comment type="similarity">
    <text evidence="6">Belongs to the glycosyl hydrolase 1 family.</text>
</comment>
<feature type="chain" id="PRO_0000390323" description="Beta-glucosidase 4">
    <location>
        <begin position="1"/>
        <end position="483"/>
    </location>
</feature>
<feature type="active site" description="Proton donor" evidence="3">
    <location>
        <position position="177"/>
    </location>
</feature>
<feature type="active site" description="Nucleophile" evidence="3">
    <location>
        <position position="380"/>
    </location>
</feature>
<feature type="binding site" evidence="3">
    <location>
        <position position="29"/>
    </location>
    <ligand>
        <name>a beta-D-glucoside</name>
        <dbReference type="ChEBI" id="CHEBI:22798"/>
    </ligand>
</feature>
<feature type="binding site" evidence="3">
    <location>
        <position position="131"/>
    </location>
    <ligand>
        <name>a beta-D-glucoside</name>
        <dbReference type="ChEBI" id="CHEBI:22798"/>
    </ligand>
</feature>
<feature type="binding site" evidence="3">
    <location>
        <begin position="176"/>
        <end position="177"/>
    </location>
    <ligand>
        <name>a beta-D-glucoside</name>
        <dbReference type="ChEBI" id="CHEBI:22798"/>
    </ligand>
</feature>
<feature type="binding site" evidence="3">
    <location>
        <position position="310"/>
    </location>
    <ligand>
        <name>a beta-D-glucoside</name>
        <dbReference type="ChEBI" id="CHEBI:22798"/>
    </ligand>
</feature>
<feature type="binding site" evidence="4">
    <location>
        <position position="380"/>
    </location>
    <ligand>
        <name>a beta-D-glucoside</name>
        <dbReference type="ChEBI" id="CHEBI:22798"/>
    </ligand>
</feature>
<feature type="binding site" evidence="3">
    <location>
        <position position="429"/>
    </location>
    <ligand>
        <name>a beta-D-glucoside</name>
        <dbReference type="ChEBI" id="CHEBI:22798"/>
    </ligand>
</feature>
<feature type="binding site" evidence="3">
    <location>
        <begin position="436"/>
        <end position="437"/>
    </location>
    <ligand>
        <name>a beta-D-glucoside</name>
        <dbReference type="ChEBI" id="CHEBI:22798"/>
    </ligand>
</feature>
<feature type="binding site" evidence="1">
    <location>
        <position position="445"/>
    </location>
    <ligand>
        <name>a beta-D-glucoside</name>
        <dbReference type="ChEBI" id="CHEBI:22798"/>
    </ligand>
</feature>
<feature type="glycosylation site" description="N-linked (GlcNAc...) asparagine" evidence="5">
    <location>
        <position position="398"/>
    </location>
</feature>
<feature type="sequence conflict" description="In Ref. 5; AK243365." evidence="6" ref="5">
    <original>K</original>
    <variation>E</variation>
    <location>
        <position position="369"/>
    </location>
</feature>